<accession>P45042</accession>
<proteinExistence type="inferred from homology"/>
<organism>
    <name type="scientific">Haemophilus influenzae (strain ATCC 51907 / DSM 11121 / KW20 / Rd)</name>
    <dbReference type="NCBI Taxonomy" id="71421"/>
    <lineage>
        <taxon>Bacteria</taxon>
        <taxon>Pseudomonadati</taxon>
        <taxon>Pseudomonadota</taxon>
        <taxon>Gammaproteobacteria</taxon>
        <taxon>Pasteurellales</taxon>
        <taxon>Pasteurellaceae</taxon>
        <taxon>Haemophilus</taxon>
    </lineage>
</organism>
<reference key="1">
    <citation type="journal article" date="1995" name="Science">
        <title>Whole-genome random sequencing and assembly of Haemophilus influenzae Rd.</title>
        <authorList>
            <person name="Fleischmann R.D."/>
            <person name="Adams M.D."/>
            <person name="White O."/>
            <person name="Clayton R.A."/>
            <person name="Kirkness E.F."/>
            <person name="Kerlavage A.R."/>
            <person name="Bult C.J."/>
            <person name="Tomb J.-F."/>
            <person name="Dougherty B.A."/>
            <person name="Merrick J.M."/>
            <person name="McKenney K."/>
            <person name="Sutton G.G."/>
            <person name="FitzHugh W."/>
            <person name="Fields C.A."/>
            <person name="Gocayne J.D."/>
            <person name="Scott J.D."/>
            <person name="Shirley R."/>
            <person name="Liu L.-I."/>
            <person name="Glodek A."/>
            <person name="Kelley J.M."/>
            <person name="Weidman J.F."/>
            <person name="Phillips C.A."/>
            <person name="Spriggs T."/>
            <person name="Hedblom E."/>
            <person name="Cotton M.D."/>
            <person name="Utterback T.R."/>
            <person name="Hanna M.C."/>
            <person name="Nguyen D.T."/>
            <person name="Saudek D.M."/>
            <person name="Brandon R.C."/>
            <person name="Fine L.D."/>
            <person name="Fritchman J.L."/>
            <person name="Fuhrmann J.L."/>
            <person name="Geoghagen N.S.M."/>
            <person name="Gnehm C.L."/>
            <person name="McDonald L.A."/>
            <person name="Small K.V."/>
            <person name="Fraser C.M."/>
            <person name="Smith H.O."/>
            <person name="Venter J.C."/>
        </authorList>
    </citation>
    <scope>NUCLEOTIDE SEQUENCE [LARGE SCALE GENOMIC DNA]</scope>
    <source>
        <strain>ATCC 51907 / DSM 11121 / KW20 / Rd</strain>
    </source>
</reference>
<sequence length="346" mass="38847">MNILIIGPSWVGDMMMSHSLYQQLKIQYPNCNIDVMAPNWCKPLLARMPEVRKAIEMPLGHGAFELGTRYRLGKSLREQYDMAIVLPNSLKSAFIPFFAKIVHRRGWKGESRYILLNDLRANKKDYPMMVQRYVALAFEKDVIPKADDIPVLKPYLTVEPAQQAETLKKFEKQTALLGERPIIGFCPGAEFGPAKRWPHYHYAKLAEMLITQGYAVALFGSAKDEPVGEEIRQALPEELREFCVNLAGKTNLNEAVDLIANCTAVVTNDSGLMHIAAAVNRPLIALYGPTSPQYTPPLSDKATIIRLIEGELIKVRKGDKEGGYHQSLIDITPEMALEKLNELLAK</sequence>
<gene>
    <name type="primary">waaF</name>
    <name type="synonym">rfaF</name>
    <name type="ordered locus">HI_1105</name>
</gene>
<dbReference type="EC" id="2.4.99.24" evidence="1"/>
<dbReference type="EMBL" id="L42023">
    <property type="protein sequence ID" value="AAC22760.1"/>
    <property type="molecule type" value="Genomic_DNA"/>
</dbReference>
<dbReference type="PIR" id="G64182">
    <property type="entry name" value="G64182"/>
</dbReference>
<dbReference type="RefSeq" id="NP_439262.1">
    <property type="nucleotide sequence ID" value="NC_000907.1"/>
</dbReference>
<dbReference type="SMR" id="P45042"/>
<dbReference type="STRING" id="71421.HI_1105"/>
<dbReference type="CAZy" id="GT9">
    <property type="family name" value="Glycosyltransferase Family 9"/>
</dbReference>
<dbReference type="DNASU" id="950079"/>
<dbReference type="EnsemblBacteria" id="AAC22760">
    <property type="protein sequence ID" value="AAC22760"/>
    <property type="gene ID" value="HI_1105"/>
</dbReference>
<dbReference type="KEGG" id="hin:HI_1105"/>
<dbReference type="PATRIC" id="fig|71421.8.peg.1153"/>
<dbReference type="eggNOG" id="COG0859">
    <property type="taxonomic scope" value="Bacteria"/>
</dbReference>
<dbReference type="HOGENOM" id="CLU_038371_7_0_6"/>
<dbReference type="OrthoDB" id="9797795at2"/>
<dbReference type="PhylomeDB" id="P45042"/>
<dbReference type="BioCyc" id="HINF71421:G1GJ1-1140-MONOMER"/>
<dbReference type="UniPathway" id="UPA00976"/>
<dbReference type="Proteomes" id="UP000000579">
    <property type="component" value="Chromosome"/>
</dbReference>
<dbReference type="GO" id="GO:0005829">
    <property type="term" value="C:cytosol"/>
    <property type="evidence" value="ECO:0000318"/>
    <property type="project" value="GO_Central"/>
</dbReference>
<dbReference type="GO" id="GO:0008713">
    <property type="term" value="F:ADP-heptose-lipopolysaccharide heptosyltransferase activity"/>
    <property type="evidence" value="ECO:0000318"/>
    <property type="project" value="GO_Central"/>
</dbReference>
<dbReference type="GO" id="GO:0009244">
    <property type="term" value="P:lipopolysaccharide core region biosynthetic process"/>
    <property type="evidence" value="ECO:0000318"/>
    <property type="project" value="GO_Central"/>
</dbReference>
<dbReference type="CDD" id="cd03789">
    <property type="entry name" value="GT9_LPS_heptosyltransferase"/>
    <property type="match status" value="1"/>
</dbReference>
<dbReference type="FunFam" id="3.40.50.2000:FF:000022">
    <property type="entry name" value="ADP-heptose--LPS heptosyltransferase II"/>
    <property type="match status" value="1"/>
</dbReference>
<dbReference type="FunFam" id="3.40.50.2000:FF:000023">
    <property type="entry name" value="ADP-heptose--LPS heptosyltransferase II"/>
    <property type="match status" value="1"/>
</dbReference>
<dbReference type="Gene3D" id="3.40.50.2000">
    <property type="entry name" value="Glycogen Phosphorylase B"/>
    <property type="match status" value="2"/>
</dbReference>
<dbReference type="InterPro" id="IPR002201">
    <property type="entry name" value="Glyco_trans_9"/>
</dbReference>
<dbReference type="InterPro" id="IPR051199">
    <property type="entry name" value="LPS_LOS_Heptosyltrfase"/>
</dbReference>
<dbReference type="InterPro" id="IPR011910">
    <property type="entry name" value="RfaF"/>
</dbReference>
<dbReference type="NCBIfam" id="TIGR02195">
    <property type="entry name" value="heptsyl_trn_II"/>
    <property type="match status" value="1"/>
</dbReference>
<dbReference type="PANTHER" id="PTHR30160:SF7">
    <property type="entry name" value="ADP-HEPTOSE--LPS HEPTOSYLTRANSFERASE 2"/>
    <property type="match status" value="1"/>
</dbReference>
<dbReference type="PANTHER" id="PTHR30160">
    <property type="entry name" value="TETRAACYLDISACCHARIDE 4'-KINASE-RELATED"/>
    <property type="match status" value="1"/>
</dbReference>
<dbReference type="Pfam" id="PF01075">
    <property type="entry name" value="Glyco_transf_9"/>
    <property type="match status" value="1"/>
</dbReference>
<dbReference type="SUPFAM" id="SSF53756">
    <property type="entry name" value="UDP-Glycosyltransferase/glycogen phosphorylase"/>
    <property type="match status" value="1"/>
</dbReference>
<evidence type="ECO:0000250" key="1">
    <source>
        <dbReference type="UniProtKB" id="P37692"/>
    </source>
</evidence>
<evidence type="ECO:0000250" key="2">
    <source>
        <dbReference type="UniProtKB" id="Q7VNA4"/>
    </source>
</evidence>
<evidence type="ECO:0000305" key="3"/>
<comment type="function">
    <text evidence="2">Glycosyltransferase involved in the biosynthesis of the core oligosaccharide region of lipooligosaccharide (LOS) (By similarity). Catalyzes the addition of a heptose unit to the heptosyl-Kdo2-lipid A module (By similarity).</text>
</comment>
<comment type="catalytic activity">
    <reaction evidence="1">
        <text>an L-alpha-D-Hep-(1-&gt;5)-[alpha-Kdo-(2-&gt;4)]-alpha-Kdo-(2-&gt;6)-lipid A + ADP-L-glycero-beta-D-manno-heptose = an L-alpha-D-Hep-(1-&gt;3)-L-alpha-D-Hep-(1-&gt;5)-[alpha-Kdo-(2-&gt;4)]-alpha-Kdo-(2-&gt;6)-lipid A + ADP + H(+)</text>
        <dbReference type="Rhea" id="RHEA:74071"/>
        <dbReference type="ChEBI" id="CHEBI:15378"/>
        <dbReference type="ChEBI" id="CHEBI:61506"/>
        <dbReference type="ChEBI" id="CHEBI:193068"/>
        <dbReference type="ChEBI" id="CHEBI:193069"/>
        <dbReference type="ChEBI" id="CHEBI:456216"/>
        <dbReference type="EC" id="2.4.99.24"/>
    </reaction>
</comment>
<comment type="pathway">
    <text evidence="2">Bacterial outer membrane biogenesis; LOS core biosynthesis.</text>
</comment>
<comment type="similarity">
    <text evidence="3">Belongs to the glycosyltransferase 9 family.</text>
</comment>
<protein>
    <recommendedName>
        <fullName evidence="3">Lipooligosaccharide heptosyltransferase 2</fullName>
        <ecNumber evidence="1">2.4.99.24</ecNumber>
    </recommendedName>
    <alternativeName>
        <fullName evidence="3">ADP-heptose:lipooligosaccharide heptosyltransferase II</fullName>
        <shortName evidence="3">ADP-heptose:LOS heptosyltransferase II</shortName>
        <shortName evidence="3">Heptosyltransferase II</shortName>
    </alternativeName>
</protein>
<feature type="chain" id="PRO_0000207263" description="Lipooligosaccharide heptosyltransferase 2">
    <location>
        <begin position="1"/>
        <end position="346"/>
    </location>
</feature>
<keyword id="KW-0328">Glycosyltransferase</keyword>
<keyword id="KW-1185">Reference proteome</keyword>
<keyword id="KW-0808">Transferase</keyword>
<name>WAAF_HAEIN</name>